<evidence type="ECO:0000255" key="1">
    <source>
        <dbReference type="HAMAP-Rule" id="MF_01562"/>
    </source>
</evidence>
<organism>
    <name type="scientific">Desulfitobacterium hafniense (strain DSM 10664 / DCB-2)</name>
    <dbReference type="NCBI Taxonomy" id="272564"/>
    <lineage>
        <taxon>Bacteria</taxon>
        <taxon>Bacillati</taxon>
        <taxon>Bacillota</taxon>
        <taxon>Clostridia</taxon>
        <taxon>Eubacteriales</taxon>
        <taxon>Desulfitobacteriaceae</taxon>
        <taxon>Desulfitobacterium</taxon>
    </lineage>
</organism>
<comment type="function">
    <text evidence="1">Found in functional membrane microdomains (FMM) that may be equivalent to eukaryotic membrane rafts. FMMs are highly dynamic and increase in number as cells age. Flotillins are thought to be important factors in membrane fluidity.</text>
</comment>
<comment type="subunit">
    <text evidence="1">Homooligomerizes.</text>
</comment>
<comment type="subcellular location">
    <subcellularLocation>
        <location evidence="1">Cell membrane</location>
        <topology evidence="1">Multi-pass membrane protein</topology>
    </subcellularLocation>
    <subcellularLocation>
        <location evidence="1">Membrane raft</location>
        <topology evidence="1">Multi-pass membrane protein</topology>
    </subcellularLocation>
</comment>
<comment type="similarity">
    <text evidence="1">Belongs to the flotillin-like FloA family.</text>
</comment>
<dbReference type="EMBL" id="CP001336">
    <property type="protein sequence ID" value="ACL20922.1"/>
    <property type="molecule type" value="Genomic_DNA"/>
</dbReference>
<dbReference type="SMR" id="B8FYJ9"/>
<dbReference type="KEGG" id="dhd:Dhaf_2899"/>
<dbReference type="HOGENOM" id="CLU_836378_0_0_9"/>
<dbReference type="Proteomes" id="UP000007726">
    <property type="component" value="Chromosome"/>
</dbReference>
<dbReference type="GO" id="GO:0045121">
    <property type="term" value="C:membrane raft"/>
    <property type="evidence" value="ECO:0007669"/>
    <property type="project" value="UniProtKB-SubCell"/>
</dbReference>
<dbReference type="GO" id="GO:0005886">
    <property type="term" value="C:plasma membrane"/>
    <property type="evidence" value="ECO:0007669"/>
    <property type="project" value="UniProtKB-SubCell"/>
</dbReference>
<dbReference type="HAMAP" id="MF_01562">
    <property type="entry name" value="FloA"/>
    <property type="match status" value="1"/>
</dbReference>
<dbReference type="InterPro" id="IPR022853">
    <property type="entry name" value="FloA"/>
</dbReference>
<dbReference type="NCBIfam" id="NF010186">
    <property type="entry name" value="PRK13665.1"/>
    <property type="match status" value="1"/>
</dbReference>
<dbReference type="Pfam" id="PF12127">
    <property type="entry name" value="FloA"/>
    <property type="match status" value="1"/>
</dbReference>
<name>FLOA_DESHD</name>
<protein>
    <recommendedName>
        <fullName evidence="1">Flotillin-like protein FloA</fullName>
    </recommendedName>
</protein>
<gene>
    <name evidence="1" type="primary">floA</name>
    <name type="ordered locus">Dhaf_2899</name>
</gene>
<feature type="chain" id="PRO_1000185438" description="Flotillin-like protein FloA">
    <location>
        <begin position="1"/>
        <end position="333"/>
    </location>
</feature>
<feature type="transmembrane region" description="Helical" evidence="1">
    <location>
        <begin position="8"/>
        <end position="28"/>
    </location>
</feature>
<feature type="transmembrane region" description="Helical" evidence="1">
    <location>
        <begin position="30"/>
        <end position="50"/>
    </location>
</feature>
<proteinExistence type="inferred from homology"/>
<accession>B8FYJ9</accession>
<sequence length="333" mass="35753">MNMPIEVLMPIILLALALILISVVFTFIPVGLWISALAAGVNVGIFTLVGMRLRRVTPSRIVNPLIKAHKAGLRVTTAQLEAHYLAGGNVDRVVNALIAAERAAIPLQFERAAAIDLAGRDVLEAVQMSVNPKVIETPVVSAVAKNGIELRVKARVTVRANIDRLVGGAGEETIIARVGEGIVTSIGSSLSHEKVLENPDMVSRTVLAKGLDSGTAFEILSIDIADVDVGKNIGAQLQTDQAEADKRIAQAKAEERRAMAVAKEQEMIAYVQEMRAKVVEAESEVPRALAEALKEGKLGVMDYYTMQNIMADTSMRDNIARSSNSNTDSNPKK</sequence>
<keyword id="KW-1003">Cell membrane</keyword>
<keyword id="KW-0472">Membrane</keyword>
<keyword id="KW-0812">Transmembrane</keyword>
<keyword id="KW-1133">Transmembrane helix</keyword>
<reference key="1">
    <citation type="journal article" date="2012" name="BMC Microbiol.">
        <title>Genome sequence of Desulfitobacterium hafniense DCB-2, a Gram-positive anaerobe capable of dehalogenation and metal reduction.</title>
        <authorList>
            <person name="Kim S.H."/>
            <person name="Harzman C."/>
            <person name="Davis J.K."/>
            <person name="Hutcheson R."/>
            <person name="Broderick J.B."/>
            <person name="Marsh T.L."/>
            <person name="Tiedje J.M."/>
        </authorList>
    </citation>
    <scope>NUCLEOTIDE SEQUENCE [LARGE SCALE GENOMIC DNA]</scope>
    <source>
        <strain>DSM 10664 / DCB-2</strain>
    </source>
</reference>